<proteinExistence type="inferred from homology"/>
<accession>P22305</accession>
<comment type="function">
    <text evidence="1">Participates actively in the response to hyperosmotic and heat shock by preventing the aggregation of stress-denatured proteins and by disaggregating proteins, also in an autonomous, DnaK-independent fashion. Unfolded proteins bind initially to DnaJ; upon interaction with the DnaJ-bound protein, DnaK hydrolyzes its bound ATP, resulting in the formation of a stable complex. GrpE releases ADP from DnaK; ATP binding to DnaK triggers the release of the substrate protein, thus completing the reaction cycle. Several rounds of ATP-dependent interactions between DnaJ, DnaK and GrpE are required for fully efficient folding. Also involved, together with DnaK and GrpE, in the DNA replication of plasmids through activation of initiation proteins.</text>
</comment>
<comment type="cofactor">
    <cofactor evidence="1">
        <name>Zn(2+)</name>
        <dbReference type="ChEBI" id="CHEBI:29105"/>
    </cofactor>
    <text evidence="1">Binds 2 Zn(2+) ions per monomer.</text>
</comment>
<comment type="subunit">
    <text evidence="1">Homodimer.</text>
</comment>
<comment type="subcellular location">
    <subcellularLocation>
        <location evidence="1">Cytoplasm</location>
    </subcellularLocation>
</comment>
<comment type="domain">
    <text evidence="1">The J domain is necessary and sufficient to stimulate DnaK ATPase activity. Zinc center 1 plays an important role in the autonomous, DnaK-independent chaperone activity of DnaJ. Zinc center 2 is essential for interaction with DnaK and for DnaJ activity.</text>
</comment>
<comment type="similarity">
    <text evidence="1">Belongs to the DnaJ family.</text>
</comment>
<keyword id="KW-0143">Chaperone</keyword>
<keyword id="KW-0963">Cytoplasm</keyword>
<keyword id="KW-0235">DNA replication</keyword>
<keyword id="KW-0479">Metal-binding</keyword>
<keyword id="KW-1185">Reference proteome</keyword>
<keyword id="KW-0677">Repeat</keyword>
<keyword id="KW-0346">Stress response</keyword>
<keyword id="KW-0862">Zinc</keyword>
<keyword id="KW-0863">Zinc-finger</keyword>
<sequence>MRDYYEILGVTRTIDEAGLKSAFRKLAMEHHPDRNGGCENAAGRFKEINEAYSVLSDPQKRAAYDRFGHAGVNGPQGGPGGFGGQGFDASDIFNDVFGDVFGEMFGGGRRQSNAPQRGQDLRYDLEITLEQAYAGAEVEITVPAAMTCEVCEGSGAKPGTSPSVCGTCGGAGRVRATQGFFAVERGCPRCGGSGRLVLDPCSNCHGHGQVRRERILSVRIPAGVDDGARIRLAGEGDAGARGGPRGDLYIFLSVTPHELFERDGLDLLCTVPVPMTTAALGGEIDAPCLLGGESCDGECKVKVHVPEGAQTGKTVRLKGKGMPSLRSRQRGDLVVELFVETPTHLSARQKELMRELAGLCGEKQNPKSANFVGKAKRFWEEVTGS</sequence>
<evidence type="ECO:0000255" key="1">
    <source>
        <dbReference type="HAMAP-Rule" id="MF_01152"/>
    </source>
</evidence>
<evidence type="ECO:0000305" key="2"/>
<dbReference type="EMBL" id="AE005673">
    <property type="protein sequence ID" value="AAK21999.1"/>
    <property type="molecule type" value="Genomic_DNA"/>
</dbReference>
<dbReference type="EMBL" id="M55224">
    <property type="protein sequence ID" value="AAA62724.1"/>
    <property type="molecule type" value="Genomic_DNA"/>
</dbReference>
<dbReference type="PIR" id="C87250">
    <property type="entry name" value="C87250"/>
</dbReference>
<dbReference type="RefSeq" id="NP_418831.1">
    <property type="nucleotide sequence ID" value="NC_002696.2"/>
</dbReference>
<dbReference type="RefSeq" id="WP_010917901.1">
    <property type="nucleotide sequence ID" value="NC_002696.2"/>
</dbReference>
<dbReference type="SMR" id="P22305"/>
<dbReference type="STRING" id="190650.CC_0011"/>
<dbReference type="EnsemblBacteria" id="AAK21999">
    <property type="protein sequence ID" value="AAK21999"/>
    <property type="gene ID" value="CC_0011"/>
</dbReference>
<dbReference type="KEGG" id="ccr:CC_0011"/>
<dbReference type="PATRIC" id="fig|190650.5.peg.12"/>
<dbReference type="eggNOG" id="COG0484">
    <property type="taxonomic scope" value="Bacteria"/>
</dbReference>
<dbReference type="HOGENOM" id="CLU_017633_0_7_5"/>
<dbReference type="BioCyc" id="CAULO:CC0011-MONOMER"/>
<dbReference type="Proteomes" id="UP000001816">
    <property type="component" value="Chromosome"/>
</dbReference>
<dbReference type="GO" id="GO:0005737">
    <property type="term" value="C:cytoplasm"/>
    <property type="evidence" value="ECO:0007669"/>
    <property type="project" value="UniProtKB-SubCell"/>
</dbReference>
<dbReference type="GO" id="GO:0005524">
    <property type="term" value="F:ATP binding"/>
    <property type="evidence" value="ECO:0007669"/>
    <property type="project" value="InterPro"/>
</dbReference>
<dbReference type="GO" id="GO:0031072">
    <property type="term" value="F:heat shock protein binding"/>
    <property type="evidence" value="ECO:0007669"/>
    <property type="project" value="InterPro"/>
</dbReference>
<dbReference type="GO" id="GO:0051082">
    <property type="term" value="F:unfolded protein binding"/>
    <property type="evidence" value="ECO:0007669"/>
    <property type="project" value="UniProtKB-UniRule"/>
</dbReference>
<dbReference type="GO" id="GO:0008270">
    <property type="term" value="F:zinc ion binding"/>
    <property type="evidence" value="ECO:0007669"/>
    <property type="project" value="UniProtKB-UniRule"/>
</dbReference>
<dbReference type="GO" id="GO:0051085">
    <property type="term" value="P:chaperone cofactor-dependent protein refolding"/>
    <property type="evidence" value="ECO:0007669"/>
    <property type="project" value="TreeGrafter"/>
</dbReference>
<dbReference type="GO" id="GO:0006260">
    <property type="term" value="P:DNA replication"/>
    <property type="evidence" value="ECO:0007669"/>
    <property type="project" value="UniProtKB-KW"/>
</dbReference>
<dbReference type="GO" id="GO:0042026">
    <property type="term" value="P:protein refolding"/>
    <property type="evidence" value="ECO:0007669"/>
    <property type="project" value="TreeGrafter"/>
</dbReference>
<dbReference type="GO" id="GO:0009408">
    <property type="term" value="P:response to heat"/>
    <property type="evidence" value="ECO:0007669"/>
    <property type="project" value="InterPro"/>
</dbReference>
<dbReference type="CDD" id="cd06257">
    <property type="entry name" value="DnaJ"/>
    <property type="match status" value="1"/>
</dbReference>
<dbReference type="CDD" id="cd10747">
    <property type="entry name" value="DnaJ_C"/>
    <property type="match status" value="1"/>
</dbReference>
<dbReference type="CDD" id="cd10719">
    <property type="entry name" value="DnaJ_zf"/>
    <property type="match status" value="1"/>
</dbReference>
<dbReference type="FunFam" id="1.10.287.110:FF:000034">
    <property type="entry name" value="Chaperone protein DnaJ"/>
    <property type="match status" value="1"/>
</dbReference>
<dbReference type="FunFam" id="2.60.260.20:FF:000005">
    <property type="entry name" value="Chaperone protein dnaJ 1, mitochondrial"/>
    <property type="match status" value="1"/>
</dbReference>
<dbReference type="FunFam" id="2.10.230.10:FF:000002">
    <property type="entry name" value="Molecular chaperone DnaJ"/>
    <property type="match status" value="1"/>
</dbReference>
<dbReference type="Gene3D" id="1.10.287.110">
    <property type="entry name" value="DnaJ domain"/>
    <property type="match status" value="1"/>
</dbReference>
<dbReference type="Gene3D" id="2.10.230.10">
    <property type="entry name" value="Heat shock protein DnaJ, cysteine-rich domain"/>
    <property type="match status" value="1"/>
</dbReference>
<dbReference type="Gene3D" id="2.60.260.20">
    <property type="entry name" value="Urease metallochaperone UreE, N-terminal domain"/>
    <property type="match status" value="2"/>
</dbReference>
<dbReference type="HAMAP" id="MF_01152">
    <property type="entry name" value="DnaJ"/>
    <property type="match status" value="1"/>
</dbReference>
<dbReference type="InterPro" id="IPR012724">
    <property type="entry name" value="DnaJ"/>
</dbReference>
<dbReference type="InterPro" id="IPR002939">
    <property type="entry name" value="DnaJ_C"/>
</dbReference>
<dbReference type="InterPro" id="IPR001623">
    <property type="entry name" value="DnaJ_domain"/>
</dbReference>
<dbReference type="InterPro" id="IPR018253">
    <property type="entry name" value="DnaJ_domain_CS"/>
</dbReference>
<dbReference type="InterPro" id="IPR008971">
    <property type="entry name" value="HSP40/DnaJ_pept-bd"/>
</dbReference>
<dbReference type="InterPro" id="IPR001305">
    <property type="entry name" value="HSP_DnaJ_Cys-rich_dom"/>
</dbReference>
<dbReference type="InterPro" id="IPR036410">
    <property type="entry name" value="HSP_DnaJ_Cys-rich_dom_sf"/>
</dbReference>
<dbReference type="InterPro" id="IPR036869">
    <property type="entry name" value="J_dom_sf"/>
</dbReference>
<dbReference type="NCBIfam" id="TIGR02349">
    <property type="entry name" value="DnaJ_bact"/>
    <property type="match status" value="1"/>
</dbReference>
<dbReference type="NCBIfam" id="NF008035">
    <property type="entry name" value="PRK10767.1"/>
    <property type="match status" value="1"/>
</dbReference>
<dbReference type="PANTHER" id="PTHR43096:SF48">
    <property type="entry name" value="CHAPERONE PROTEIN DNAJ"/>
    <property type="match status" value="1"/>
</dbReference>
<dbReference type="PANTHER" id="PTHR43096">
    <property type="entry name" value="DNAJ HOMOLOG 1, MITOCHONDRIAL-RELATED"/>
    <property type="match status" value="1"/>
</dbReference>
<dbReference type="Pfam" id="PF00226">
    <property type="entry name" value="DnaJ"/>
    <property type="match status" value="1"/>
</dbReference>
<dbReference type="Pfam" id="PF01556">
    <property type="entry name" value="DnaJ_C"/>
    <property type="match status" value="1"/>
</dbReference>
<dbReference type="Pfam" id="PF00684">
    <property type="entry name" value="DnaJ_CXXCXGXG"/>
    <property type="match status" value="1"/>
</dbReference>
<dbReference type="PRINTS" id="PR00625">
    <property type="entry name" value="JDOMAIN"/>
</dbReference>
<dbReference type="SMART" id="SM00271">
    <property type="entry name" value="DnaJ"/>
    <property type="match status" value="1"/>
</dbReference>
<dbReference type="SUPFAM" id="SSF46565">
    <property type="entry name" value="Chaperone J-domain"/>
    <property type="match status" value="1"/>
</dbReference>
<dbReference type="SUPFAM" id="SSF57938">
    <property type="entry name" value="DnaJ/Hsp40 cysteine-rich domain"/>
    <property type="match status" value="1"/>
</dbReference>
<dbReference type="SUPFAM" id="SSF49493">
    <property type="entry name" value="HSP40/DnaJ peptide-binding domain"/>
    <property type="match status" value="2"/>
</dbReference>
<dbReference type="PROSITE" id="PS00636">
    <property type="entry name" value="DNAJ_1"/>
    <property type="match status" value="1"/>
</dbReference>
<dbReference type="PROSITE" id="PS50076">
    <property type="entry name" value="DNAJ_2"/>
    <property type="match status" value="1"/>
</dbReference>
<dbReference type="PROSITE" id="PS51188">
    <property type="entry name" value="ZF_CR"/>
    <property type="match status" value="1"/>
</dbReference>
<protein>
    <recommendedName>
        <fullName evidence="1">Chaperone protein DnaJ</fullName>
    </recommendedName>
</protein>
<reference key="1">
    <citation type="journal article" date="2001" name="Proc. Natl. Acad. Sci. U.S.A.">
        <title>Complete genome sequence of Caulobacter crescentus.</title>
        <authorList>
            <person name="Nierman W.C."/>
            <person name="Feldblyum T.V."/>
            <person name="Laub M.T."/>
            <person name="Paulsen I.T."/>
            <person name="Nelson K.E."/>
            <person name="Eisen J.A."/>
            <person name="Heidelberg J.F."/>
            <person name="Alley M.R.K."/>
            <person name="Ohta N."/>
            <person name="Maddock J.R."/>
            <person name="Potocka I."/>
            <person name="Nelson W.C."/>
            <person name="Newton A."/>
            <person name="Stephens C."/>
            <person name="Phadke N.D."/>
            <person name="Ely B."/>
            <person name="DeBoy R.T."/>
            <person name="Dodson R.J."/>
            <person name="Durkin A.S."/>
            <person name="Gwinn M.L."/>
            <person name="Haft D.H."/>
            <person name="Kolonay J.F."/>
            <person name="Smit J."/>
            <person name="Craven M.B."/>
            <person name="Khouri H.M."/>
            <person name="Shetty J."/>
            <person name="Berry K.J."/>
            <person name="Utterback T.R."/>
            <person name="Tran K."/>
            <person name="Wolf A.M."/>
            <person name="Vamathevan J.J."/>
            <person name="Ermolaeva M.D."/>
            <person name="White O."/>
            <person name="Salzberg S.L."/>
            <person name="Venter J.C."/>
            <person name="Shapiro L."/>
            <person name="Fraser C.M."/>
        </authorList>
    </citation>
    <scope>NUCLEOTIDE SEQUENCE [LARGE SCALE GENOMIC DNA]</scope>
    <source>
        <strain>ATCC 19089 / CIP 103742 / CB 15</strain>
    </source>
</reference>
<reference key="2">
    <citation type="journal article" date="1990" name="J. Bacteriol.">
        <title>Expression of the Caulobacter heat shock gene dnaK is developmentally controlled during growth at normal temperatures.</title>
        <authorList>
            <person name="Gomes S.L."/>
            <person name="Gober J.W."/>
            <person name="Shapiro L."/>
        </authorList>
    </citation>
    <scope>NUCLEOTIDE SEQUENCE [GENOMIC DNA] OF 1-193</scope>
</reference>
<feature type="chain" id="PRO_0000070754" description="Chaperone protein DnaJ">
    <location>
        <begin position="1"/>
        <end position="385"/>
    </location>
</feature>
<feature type="domain" description="J" evidence="1">
    <location>
        <begin position="3"/>
        <end position="68"/>
    </location>
</feature>
<feature type="repeat" description="CXXCXGXG motif">
    <location>
        <begin position="148"/>
        <end position="155"/>
    </location>
</feature>
<feature type="repeat" description="CXXCXGXG motif">
    <location>
        <begin position="165"/>
        <end position="172"/>
    </location>
</feature>
<feature type="repeat" description="CXXCXGXG motif">
    <location>
        <begin position="187"/>
        <end position="194"/>
    </location>
</feature>
<feature type="repeat" description="CXXCXGXG motif">
    <location>
        <begin position="201"/>
        <end position="208"/>
    </location>
</feature>
<feature type="zinc finger region" description="CR-type" evidence="1">
    <location>
        <begin position="135"/>
        <end position="213"/>
    </location>
</feature>
<feature type="binding site" evidence="1">
    <location>
        <position position="148"/>
    </location>
    <ligand>
        <name>Zn(2+)</name>
        <dbReference type="ChEBI" id="CHEBI:29105"/>
        <label>1</label>
    </ligand>
</feature>
<feature type="binding site" evidence="1">
    <location>
        <position position="151"/>
    </location>
    <ligand>
        <name>Zn(2+)</name>
        <dbReference type="ChEBI" id="CHEBI:29105"/>
        <label>1</label>
    </ligand>
</feature>
<feature type="binding site" evidence="1">
    <location>
        <position position="165"/>
    </location>
    <ligand>
        <name>Zn(2+)</name>
        <dbReference type="ChEBI" id="CHEBI:29105"/>
        <label>2</label>
    </ligand>
</feature>
<feature type="binding site" evidence="1">
    <location>
        <position position="168"/>
    </location>
    <ligand>
        <name>Zn(2+)</name>
        <dbReference type="ChEBI" id="CHEBI:29105"/>
        <label>2</label>
    </ligand>
</feature>
<feature type="binding site" evidence="1">
    <location>
        <position position="187"/>
    </location>
    <ligand>
        <name>Zn(2+)</name>
        <dbReference type="ChEBI" id="CHEBI:29105"/>
        <label>2</label>
    </ligand>
</feature>
<feature type="binding site" evidence="1">
    <location>
        <position position="190"/>
    </location>
    <ligand>
        <name>Zn(2+)</name>
        <dbReference type="ChEBI" id="CHEBI:29105"/>
        <label>2</label>
    </ligand>
</feature>
<feature type="binding site" evidence="1">
    <location>
        <position position="201"/>
    </location>
    <ligand>
        <name>Zn(2+)</name>
        <dbReference type="ChEBI" id="CHEBI:29105"/>
        <label>1</label>
    </ligand>
</feature>
<feature type="binding site" evidence="1">
    <location>
        <position position="204"/>
    </location>
    <ligand>
        <name>Zn(2+)</name>
        <dbReference type="ChEBI" id="CHEBI:29105"/>
        <label>1</label>
    </ligand>
</feature>
<feature type="sequence conflict" description="In Ref. 2; AAA62724." evidence="2" ref="2">
    <original>AF</original>
    <variation>RV</variation>
    <location>
        <begin position="22"/>
        <end position="23"/>
    </location>
</feature>
<feature type="sequence conflict" description="In Ref. 2; AAA62724." evidence="2" ref="2">
    <original>P</original>
    <variation>S</variation>
    <location>
        <position position="58"/>
    </location>
</feature>
<feature type="sequence conflict" description="In Ref. 2; AAA62724." evidence="2" ref="2">
    <original>GVNGPQG</original>
    <variation>AGQRGRN</variation>
    <location>
        <begin position="71"/>
        <end position="77"/>
    </location>
</feature>
<feature type="sequence conflict" description="In Ref. 2; AAA62724." evidence="2" ref="2">
    <original>RQSNA</original>
    <variation>AVQR</variation>
    <location>
        <begin position="110"/>
        <end position="114"/>
    </location>
</feature>
<feature type="sequence conflict" description="In Ref. 2; AAA62724." evidence="2" ref="2">
    <original>VPAAMT</original>
    <variation>IPRHEP</variation>
    <location>
        <begin position="142"/>
        <end position="147"/>
    </location>
</feature>
<feature type="sequence conflict" description="In Ref. 2; AAA62724." evidence="2" ref="2">
    <original>SPSVCG</original>
    <variation>QPLCLR</variation>
    <location>
        <begin position="161"/>
        <end position="166"/>
    </location>
</feature>
<feature type="sequence conflict" description="In Ref. 2; AAA62724." evidence="2" ref="2">
    <original>R</original>
    <variation>P</variation>
    <location>
        <position position="173"/>
    </location>
</feature>
<feature type="sequence conflict" description="In Ref. 2; AAA62724." evidence="2" ref="2">
    <original>RGCP</original>
    <variation>AA</variation>
    <location>
        <begin position="185"/>
        <end position="188"/>
    </location>
</feature>
<organism>
    <name type="scientific">Caulobacter vibrioides (strain ATCC 19089 / CIP 103742 / CB 15)</name>
    <name type="common">Caulobacter crescentus</name>
    <dbReference type="NCBI Taxonomy" id="190650"/>
    <lineage>
        <taxon>Bacteria</taxon>
        <taxon>Pseudomonadati</taxon>
        <taxon>Pseudomonadota</taxon>
        <taxon>Alphaproteobacteria</taxon>
        <taxon>Caulobacterales</taxon>
        <taxon>Caulobacteraceae</taxon>
        <taxon>Caulobacter</taxon>
    </lineage>
</organism>
<gene>
    <name evidence="1" type="primary">dnaJ</name>
    <name type="ordered locus">CC_0011</name>
</gene>
<name>DNAJ_CAUVC</name>